<gene>
    <name evidence="1" type="primary">gatC</name>
    <name type="ordered locus">Mpop_3522</name>
</gene>
<proteinExistence type="inferred from homology"/>
<accession>B1ZLM0</accession>
<keyword id="KW-0067">ATP-binding</keyword>
<keyword id="KW-0436">Ligase</keyword>
<keyword id="KW-0547">Nucleotide-binding</keyword>
<keyword id="KW-0648">Protein biosynthesis</keyword>
<reference key="1">
    <citation type="submission" date="2008-04" db="EMBL/GenBank/DDBJ databases">
        <title>Complete sequence of chromosome of Methylobacterium populi BJ001.</title>
        <authorList>
            <consortium name="US DOE Joint Genome Institute"/>
            <person name="Copeland A."/>
            <person name="Lucas S."/>
            <person name="Lapidus A."/>
            <person name="Glavina del Rio T."/>
            <person name="Dalin E."/>
            <person name="Tice H."/>
            <person name="Bruce D."/>
            <person name="Goodwin L."/>
            <person name="Pitluck S."/>
            <person name="Chertkov O."/>
            <person name="Brettin T."/>
            <person name="Detter J.C."/>
            <person name="Han C."/>
            <person name="Kuske C.R."/>
            <person name="Schmutz J."/>
            <person name="Larimer F."/>
            <person name="Land M."/>
            <person name="Hauser L."/>
            <person name="Kyrpides N."/>
            <person name="Mikhailova N."/>
            <person name="Marx C."/>
            <person name="Richardson P."/>
        </authorList>
    </citation>
    <scope>NUCLEOTIDE SEQUENCE [LARGE SCALE GENOMIC DNA]</scope>
    <source>
        <strain>ATCC BAA-705 / NCIMB 13946 / BJ001</strain>
    </source>
</reference>
<feature type="chain" id="PRO_1000095295" description="Aspartyl/glutamyl-tRNA(Asn/Gln) amidotransferase subunit C">
    <location>
        <begin position="1"/>
        <end position="95"/>
    </location>
</feature>
<sequence>MSVDETTVRRIAHLARIAVADEDVGPLQGELNAILAFVEQLGAVDVEGVEPMTSVTPMRMKKRADVVNDGGRASDIVANAPETEDNYFLVPKVVE</sequence>
<name>GATC_METPB</name>
<evidence type="ECO:0000255" key="1">
    <source>
        <dbReference type="HAMAP-Rule" id="MF_00122"/>
    </source>
</evidence>
<dbReference type="EC" id="6.3.5.-" evidence="1"/>
<dbReference type="EMBL" id="CP001029">
    <property type="protein sequence ID" value="ACB81672.1"/>
    <property type="molecule type" value="Genomic_DNA"/>
</dbReference>
<dbReference type="RefSeq" id="WP_012455388.1">
    <property type="nucleotide sequence ID" value="NC_010725.1"/>
</dbReference>
<dbReference type="SMR" id="B1ZLM0"/>
<dbReference type="STRING" id="441620.Mpop_3522"/>
<dbReference type="KEGG" id="mpo:Mpop_3522"/>
<dbReference type="eggNOG" id="COG0721">
    <property type="taxonomic scope" value="Bacteria"/>
</dbReference>
<dbReference type="HOGENOM" id="CLU_105899_2_0_5"/>
<dbReference type="OrthoDB" id="9794326at2"/>
<dbReference type="Proteomes" id="UP000007136">
    <property type="component" value="Chromosome"/>
</dbReference>
<dbReference type="GO" id="GO:0050566">
    <property type="term" value="F:asparaginyl-tRNA synthase (glutamine-hydrolyzing) activity"/>
    <property type="evidence" value="ECO:0007669"/>
    <property type="project" value="RHEA"/>
</dbReference>
<dbReference type="GO" id="GO:0005524">
    <property type="term" value="F:ATP binding"/>
    <property type="evidence" value="ECO:0007669"/>
    <property type="project" value="UniProtKB-KW"/>
</dbReference>
<dbReference type="GO" id="GO:0050567">
    <property type="term" value="F:glutaminyl-tRNA synthase (glutamine-hydrolyzing) activity"/>
    <property type="evidence" value="ECO:0007669"/>
    <property type="project" value="UniProtKB-UniRule"/>
</dbReference>
<dbReference type="GO" id="GO:0070681">
    <property type="term" value="P:glutaminyl-tRNAGln biosynthesis via transamidation"/>
    <property type="evidence" value="ECO:0007669"/>
    <property type="project" value="TreeGrafter"/>
</dbReference>
<dbReference type="GO" id="GO:0006450">
    <property type="term" value="P:regulation of translational fidelity"/>
    <property type="evidence" value="ECO:0007669"/>
    <property type="project" value="InterPro"/>
</dbReference>
<dbReference type="GO" id="GO:0006412">
    <property type="term" value="P:translation"/>
    <property type="evidence" value="ECO:0007669"/>
    <property type="project" value="UniProtKB-UniRule"/>
</dbReference>
<dbReference type="Gene3D" id="1.10.20.60">
    <property type="entry name" value="Glu-tRNAGln amidotransferase C subunit, N-terminal domain"/>
    <property type="match status" value="1"/>
</dbReference>
<dbReference type="HAMAP" id="MF_00122">
    <property type="entry name" value="GatC"/>
    <property type="match status" value="1"/>
</dbReference>
<dbReference type="InterPro" id="IPR036113">
    <property type="entry name" value="Asp/Glu-ADT_sf_sub_c"/>
</dbReference>
<dbReference type="InterPro" id="IPR003837">
    <property type="entry name" value="GatC"/>
</dbReference>
<dbReference type="NCBIfam" id="TIGR00135">
    <property type="entry name" value="gatC"/>
    <property type="match status" value="1"/>
</dbReference>
<dbReference type="PANTHER" id="PTHR15004">
    <property type="entry name" value="GLUTAMYL-TRNA(GLN) AMIDOTRANSFERASE SUBUNIT C, MITOCHONDRIAL"/>
    <property type="match status" value="1"/>
</dbReference>
<dbReference type="PANTHER" id="PTHR15004:SF0">
    <property type="entry name" value="GLUTAMYL-TRNA(GLN) AMIDOTRANSFERASE SUBUNIT C, MITOCHONDRIAL"/>
    <property type="match status" value="1"/>
</dbReference>
<dbReference type="Pfam" id="PF02686">
    <property type="entry name" value="GatC"/>
    <property type="match status" value="1"/>
</dbReference>
<dbReference type="SUPFAM" id="SSF141000">
    <property type="entry name" value="Glu-tRNAGln amidotransferase C subunit"/>
    <property type="match status" value="1"/>
</dbReference>
<comment type="function">
    <text evidence="1">Allows the formation of correctly charged Asn-tRNA(Asn) or Gln-tRNA(Gln) through the transamidation of misacylated Asp-tRNA(Asn) or Glu-tRNA(Gln) in organisms which lack either or both of asparaginyl-tRNA or glutaminyl-tRNA synthetases. The reaction takes place in the presence of glutamine and ATP through an activated phospho-Asp-tRNA(Asn) or phospho-Glu-tRNA(Gln).</text>
</comment>
<comment type="catalytic activity">
    <reaction evidence="1">
        <text>L-glutamyl-tRNA(Gln) + L-glutamine + ATP + H2O = L-glutaminyl-tRNA(Gln) + L-glutamate + ADP + phosphate + H(+)</text>
        <dbReference type="Rhea" id="RHEA:17521"/>
        <dbReference type="Rhea" id="RHEA-COMP:9681"/>
        <dbReference type="Rhea" id="RHEA-COMP:9684"/>
        <dbReference type="ChEBI" id="CHEBI:15377"/>
        <dbReference type="ChEBI" id="CHEBI:15378"/>
        <dbReference type="ChEBI" id="CHEBI:29985"/>
        <dbReference type="ChEBI" id="CHEBI:30616"/>
        <dbReference type="ChEBI" id="CHEBI:43474"/>
        <dbReference type="ChEBI" id="CHEBI:58359"/>
        <dbReference type="ChEBI" id="CHEBI:78520"/>
        <dbReference type="ChEBI" id="CHEBI:78521"/>
        <dbReference type="ChEBI" id="CHEBI:456216"/>
    </reaction>
</comment>
<comment type="catalytic activity">
    <reaction evidence="1">
        <text>L-aspartyl-tRNA(Asn) + L-glutamine + ATP + H2O = L-asparaginyl-tRNA(Asn) + L-glutamate + ADP + phosphate + 2 H(+)</text>
        <dbReference type="Rhea" id="RHEA:14513"/>
        <dbReference type="Rhea" id="RHEA-COMP:9674"/>
        <dbReference type="Rhea" id="RHEA-COMP:9677"/>
        <dbReference type="ChEBI" id="CHEBI:15377"/>
        <dbReference type="ChEBI" id="CHEBI:15378"/>
        <dbReference type="ChEBI" id="CHEBI:29985"/>
        <dbReference type="ChEBI" id="CHEBI:30616"/>
        <dbReference type="ChEBI" id="CHEBI:43474"/>
        <dbReference type="ChEBI" id="CHEBI:58359"/>
        <dbReference type="ChEBI" id="CHEBI:78515"/>
        <dbReference type="ChEBI" id="CHEBI:78516"/>
        <dbReference type="ChEBI" id="CHEBI:456216"/>
    </reaction>
</comment>
<comment type="subunit">
    <text evidence="1">Heterotrimer of A, B and C subunits.</text>
</comment>
<comment type="similarity">
    <text evidence="1">Belongs to the GatC family.</text>
</comment>
<organism>
    <name type="scientific">Methylorubrum populi (strain ATCC BAA-705 / NCIMB 13946 / BJ001)</name>
    <name type="common">Methylobacterium populi</name>
    <dbReference type="NCBI Taxonomy" id="441620"/>
    <lineage>
        <taxon>Bacteria</taxon>
        <taxon>Pseudomonadati</taxon>
        <taxon>Pseudomonadota</taxon>
        <taxon>Alphaproteobacteria</taxon>
        <taxon>Hyphomicrobiales</taxon>
        <taxon>Methylobacteriaceae</taxon>
        <taxon>Methylorubrum</taxon>
    </lineage>
</organism>
<protein>
    <recommendedName>
        <fullName evidence="1">Aspartyl/glutamyl-tRNA(Asn/Gln) amidotransferase subunit C</fullName>
        <shortName evidence="1">Asp/Glu-ADT subunit C</shortName>
        <ecNumber evidence="1">6.3.5.-</ecNumber>
    </recommendedName>
</protein>